<reference key="1">
    <citation type="journal article" date="2000" name="Nature">
        <title>Sequence and analysis of chromosome 1 of the plant Arabidopsis thaliana.</title>
        <authorList>
            <person name="Theologis A."/>
            <person name="Ecker J.R."/>
            <person name="Palm C.J."/>
            <person name="Federspiel N.A."/>
            <person name="Kaul S."/>
            <person name="White O."/>
            <person name="Alonso J."/>
            <person name="Altafi H."/>
            <person name="Araujo R."/>
            <person name="Bowman C.L."/>
            <person name="Brooks S.Y."/>
            <person name="Buehler E."/>
            <person name="Chan A."/>
            <person name="Chao Q."/>
            <person name="Chen H."/>
            <person name="Cheuk R.F."/>
            <person name="Chin C.W."/>
            <person name="Chung M.K."/>
            <person name="Conn L."/>
            <person name="Conway A.B."/>
            <person name="Conway A.R."/>
            <person name="Creasy T.H."/>
            <person name="Dewar K."/>
            <person name="Dunn P."/>
            <person name="Etgu P."/>
            <person name="Feldblyum T.V."/>
            <person name="Feng J.-D."/>
            <person name="Fong B."/>
            <person name="Fujii C.Y."/>
            <person name="Gill J.E."/>
            <person name="Goldsmith A.D."/>
            <person name="Haas B."/>
            <person name="Hansen N.F."/>
            <person name="Hughes B."/>
            <person name="Huizar L."/>
            <person name="Hunter J.L."/>
            <person name="Jenkins J."/>
            <person name="Johnson-Hopson C."/>
            <person name="Khan S."/>
            <person name="Khaykin E."/>
            <person name="Kim C.J."/>
            <person name="Koo H.L."/>
            <person name="Kremenetskaia I."/>
            <person name="Kurtz D.B."/>
            <person name="Kwan A."/>
            <person name="Lam B."/>
            <person name="Langin-Hooper S."/>
            <person name="Lee A."/>
            <person name="Lee J.M."/>
            <person name="Lenz C.A."/>
            <person name="Li J.H."/>
            <person name="Li Y.-P."/>
            <person name="Lin X."/>
            <person name="Liu S.X."/>
            <person name="Liu Z.A."/>
            <person name="Luros J.S."/>
            <person name="Maiti R."/>
            <person name="Marziali A."/>
            <person name="Militscher J."/>
            <person name="Miranda M."/>
            <person name="Nguyen M."/>
            <person name="Nierman W.C."/>
            <person name="Osborne B.I."/>
            <person name="Pai G."/>
            <person name="Peterson J."/>
            <person name="Pham P.K."/>
            <person name="Rizzo M."/>
            <person name="Rooney T."/>
            <person name="Rowley D."/>
            <person name="Sakano H."/>
            <person name="Salzberg S.L."/>
            <person name="Schwartz J.R."/>
            <person name="Shinn P."/>
            <person name="Southwick A.M."/>
            <person name="Sun H."/>
            <person name="Tallon L.J."/>
            <person name="Tambunga G."/>
            <person name="Toriumi M.J."/>
            <person name="Town C.D."/>
            <person name="Utterback T."/>
            <person name="Van Aken S."/>
            <person name="Vaysberg M."/>
            <person name="Vysotskaia V.S."/>
            <person name="Walker M."/>
            <person name="Wu D."/>
            <person name="Yu G."/>
            <person name="Fraser C.M."/>
            <person name="Venter J.C."/>
            <person name="Davis R.W."/>
        </authorList>
    </citation>
    <scope>NUCLEOTIDE SEQUENCE [LARGE SCALE GENOMIC DNA]</scope>
    <source>
        <strain>cv. Columbia</strain>
    </source>
</reference>
<reference key="2">
    <citation type="journal article" date="2017" name="Plant J.">
        <title>Araport11: a complete reannotation of the Arabidopsis thaliana reference genome.</title>
        <authorList>
            <person name="Cheng C.Y."/>
            <person name="Krishnakumar V."/>
            <person name="Chan A.P."/>
            <person name="Thibaud-Nissen F."/>
            <person name="Schobel S."/>
            <person name="Town C.D."/>
        </authorList>
    </citation>
    <scope>GENOME REANNOTATION</scope>
    <source>
        <strain>cv. Columbia</strain>
    </source>
</reference>
<reference key="3">
    <citation type="journal article" date="2016" name="PLoS Genet.">
        <title>Arabidopsis COG complex subunits COG3 and COG8 modulate golgi morphology, vesicle trafficking homeostasis and are essential for pollen tube growth.</title>
        <authorList>
            <person name="Tan X."/>
            <person name="Cao K."/>
            <person name="Liu F."/>
            <person name="Li Y."/>
            <person name="Li P."/>
            <person name="Gao C."/>
            <person name="Ding Y."/>
            <person name="Lan Z."/>
            <person name="Shi Z."/>
            <person name="Rui Q."/>
            <person name="Feng Y."/>
            <person name="Liu Y."/>
            <person name="Zhao Y."/>
            <person name="Wu C."/>
            <person name="Zhang Q."/>
            <person name="Li Y."/>
            <person name="Jiang L."/>
            <person name="Bao Y."/>
        </authorList>
    </citation>
    <scope>SUBUNIT</scope>
    <scope>INTERACTION WITH COG3; COG6; COG7 AND COG8</scope>
    <scope>GENE FAMILY</scope>
    <scope>NOMENCLATURE</scope>
</reference>
<sequence length="832" mass="91651">MALPPSSPSPSSPSLQRLSTFKNPPPSSLSSGAPPPQTPSSSSSSPLDSFATDPILSPFLSSSFSSASFSSAALASGSPASTAERLHQAIRLLDSQLRNDVISRHPELLAQLSSLSHADVSLSSLRSSVSSLQSSIRRVRSDLSEPIKSIRSKSVQLSNLHTATELLSHSVRTLRLSKKLRDLADFPDPDKIDLTKAAQFHFEILTMCKEYDLFGIDVIDEEIKFVTEIGEKLRSEAMKVLERGMEGLNQAEVGTGLQVFYNLGELKSTVDQLVNKYKGMAVKSVSVAMDMKAITSGSGGGFGPGGIRSSGSPHIGGGAKVREALWQRMASCMEQLCSLVVAVWHLQRVLSKKRDPFTHVLLLDEVIKEGDSMLTDRVWDALVKAFTSQMKSAYTASSFVKEIFTMGYPKLVSMIENLLERISRDTDVKGVLPAINLERKEQMVACIAIFQTAFLSLCFGRLSDLVNSIFPMSSRGSLPSKEQISQVLSHIQDEIEAVHPDARLTLLVLREIGKALSNLAQRAECQISTGPETRQISGPATSTQIRNFTLCQHLQGIHTHISSMVADLPSIATDVLSPYLAAIYDAACEPVTPLFKAMRDKLESCILQIHDQNFGADDADMDNNASSYMEELQRSILHFRKEFLSRLLPSAANANTAGTESICTRLTRQMASRVLIFYIRHASLVRPLSEWGKLRMAKDMAELELAVGQNLFPVEQLGAPYRALRAFRPLVFLETSQMGSSPLINDLPPSIVLHHLYTRGPDELESPMQKNRLSPKQYSLWLDNQREDQIWKGIKATLDDYAVKIRSRGDKEFSPVYPLMLQIGSSLTQENL</sequence>
<accession>Q9C9V9</accession>
<protein>
    <recommendedName>
        <fullName evidence="4">Conserved oligomeric Golgi complex subunit 5</fullName>
        <shortName evidence="4">COG complex subunit 5</shortName>
    </recommendedName>
    <alternativeName>
        <fullName evidence="4">Component of oligomeric Golgi complex 5</fullName>
    </alternativeName>
</protein>
<keyword id="KW-0333">Golgi apparatus</keyword>
<keyword id="KW-0472">Membrane</keyword>
<keyword id="KW-1185">Reference proteome</keyword>
<name>COG5_ARATH</name>
<dbReference type="EMBL" id="AC012563">
    <property type="protein sequence ID" value="AAG52007.1"/>
    <property type="molecule type" value="Genomic_DNA"/>
</dbReference>
<dbReference type="EMBL" id="CP002684">
    <property type="protein sequence ID" value="AEE34723.1"/>
    <property type="molecule type" value="Genomic_DNA"/>
</dbReference>
<dbReference type="PIR" id="B96702">
    <property type="entry name" value="B96702"/>
</dbReference>
<dbReference type="RefSeq" id="NP_176960.1">
    <property type="nucleotide sequence ID" value="NM_105463.4"/>
</dbReference>
<dbReference type="SMR" id="Q9C9V9"/>
<dbReference type="FunCoup" id="Q9C9V9">
    <property type="interactions" value="3395"/>
</dbReference>
<dbReference type="IntAct" id="Q9C9V9">
    <property type="interactions" value="1"/>
</dbReference>
<dbReference type="STRING" id="3702.Q9C9V9"/>
<dbReference type="iPTMnet" id="Q9C9V9"/>
<dbReference type="PaxDb" id="3702-AT1G67930.1"/>
<dbReference type="ProteomicsDB" id="185077"/>
<dbReference type="EnsemblPlants" id="AT1G67930.1">
    <property type="protein sequence ID" value="AT1G67930.1"/>
    <property type="gene ID" value="AT1G67930"/>
</dbReference>
<dbReference type="GeneID" id="843121"/>
<dbReference type="Gramene" id="AT1G67930.1">
    <property type="protein sequence ID" value="AT1G67930.1"/>
    <property type="gene ID" value="AT1G67930"/>
</dbReference>
<dbReference type="KEGG" id="ath:AT1G67930"/>
<dbReference type="Araport" id="AT1G67930"/>
<dbReference type="TAIR" id="AT1G67930">
    <property type="gene designation" value="COG5"/>
</dbReference>
<dbReference type="eggNOG" id="KOG2211">
    <property type="taxonomic scope" value="Eukaryota"/>
</dbReference>
<dbReference type="HOGENOM" id="CLU_009839_1_1_1"/>
<dbReference type="InParanoid" id="Q9C9V9"/>
<dbReference type="OMA" id="MMVEYFE"/>
<dbReference type="OrthoDB" id="18786at2759"/>
<dbReference type="PhylomeDB" id="Q9C9V9"/>
<dbReference type="PRO" id="PR:Q9C9V9"/>
<dbReference type="Proteomes" id="UP000006548">
    <property type="component" value="Chromosome 1"/>
</dbReference>
<dbReference type="ExpressionAtlas" id="Q9C9V9">
    <property type="expression patterns" value="baseline and differential"/>
</dbReference>
<dbReference type="GO" id="GO:0000139">
    <property type="term" value="C:Golgi membrane"/>
    <property type="evidence" value="ECO:0007669"/>
    <property type="project" value="UniProtKB-SubCell"/>
</dbReference>
<dbReference type="GO" id="GO:0017119">
    <property type="term" value="C:Golgi transport complex"/>
    <property type="evidence" value="ECO:0007669"/>
    <property type="project" value="InterPro"/>
</dbReference>
<dbReference type="GO" id="GO:0005739">
    <property type="term" value="C:mitochondrion"/>
    <property type="evidence" value="ECO:0007005"/>
    <property type="project" value="TAIR"/>
</dbReference>
<dbReference type="GO" id="GO:0042803">
    <property type="term" value="F:protein homodimerization activity"/>
    <property type="evidence" value="ECO:0000314"/>
    <property type="project" value="UniProtKB"/>
</dbReference>
<dbReference type="GO" id="GO:0006891">
    <property type="term" value="P:intra-Golgi vesicle-mediated transport"/>
    <property type="evidence" value="ECO:0007669"/>
    <property type="project" value="InterPro"/>
</dbReference>
<dbReference type="InterPro" id="IPR019465">
    <property type="entry name" value="Cog5"/>
</dbReference>
<dbReference type="InterPro" id="IPR048485">
    <property type="entry name" value="COG5_helical"/>
</dbReference>
<dbReference type="InterPro" id="IPR049176">
    <property type="entry name" value="COG5_N"/>
</dbReference>
<dbReference type="PANTHER" id="PTHR13228">
    <property type="entry name" value="CONSERVED OLIGOMERIC GOLGI COMPLEX COMPONENT 5"/>
    <property type="match status" value="1"/>
</dbReference>
<dbReference type="PANTHER" id="PTHR13228:SF3">
    <property type="entry name" value="CONSERVED OLIGOMERIC GOLGI COMPLEX SUBUNIT 5"/>
    <property type="match status" value="1"/>
</dbReference>
<dbReference type="Pfam" id="PF20649">
    <property type="entry name" value="COG5_C"/>
    <property type="match status" value="1"/>
</dbReference>
<dbReference type="Pfam" id="PF10392">
    <property type="entry name" value="COG5_N"/>
    <property type="match status" value="1"/>
</dbReference>
<evidence type="ECO:0000250" key="1">
    <source>
        <dbReference type="UniProtKB" id="Q9VJD3"/>
    </source>
</evidence>
<evidence type="ECO:0000256" key="2">
    <source>
        <dbReference type="SAM" id="MobiDB-lite"/>
    </source>
</evidence>
<evidence type="ECO:0000269" key="3">
    <source>
    </source>
</evidence>
<evidence type="ECO:0000303" key="4">
    <source>
    </source>
</evidence>
<evidence type="ECO:0000305" key="5"/>
<evidence type="ECO:0000305" key="6">
    <source>
    </source>
</evidence>
<evidence type="ECO:0000312" key="7">
    <source>
        <dbReference type="Araport" id="AT1G67930"/>
    </source>
</evidence>
<evidence type="ECO:0000312" key="8">
    <source>
        <dbReference type="EMBL" id="AAG52007.1"/>
    </source>
</evidence>
<proteinExistence type="evidence at protein level"/>
<gene>
    <name evidence="4" type="primary">COG5</name>
    <name evidence="7" type="ordered locus">At1g67930</name>
    <name evidence="8" type="ORF">T23K23.22</name>
</gene>
<comment type="function">
    <text evidence="1">Required for normal Golgi function.</text>
</comment>
<comment type="subunit">
    <text evidence="3 6">Homodimer (PubMed:27448097). Component of the conserved oligomeric Golgi complex which is composed of eight different subunits and is required for normal Golgi morphology and localization (Probable). Interacts with COG3, COG6, COG7 and COG8 (PubMed:27448097).</text>
</comment>
<comment type="subcellular location">
    <subcellularLocation>
        <location evidence="1">Golgi apparatus membrane</location>
        <topology evidence="1">Peripheral membrane protein</topology>
    </subcellularLocation>
</comment>
<comment type="similarity">
    <text evidence="5">Belongs to the COG5 family.</text>
</comment>
<organism>
    <name type="scientific">Arabidopsis thaliana</name>
    <name type="common">Mouse-ear cress</name>
    <dbReference type="NCBI Taxonomy" id="3702"/>
    <lineage>
        <taxon>Eukaryota</taxon>
        <taxon>Viridiplantae</taxon>
        <taxon>Streptophyta</taxon>
        <taxon>Embryophyta</taxon>
        <taxon>Tracheophyta</taxon>
        <taxon>Spermatophyta</taxon>
        <taxon>Magnoliopsida</taxon>
        <taxon>eudicotyledons</taxon>
        <taxon>Gunneridae</taxon>
        <taxon>Pentapetalae</taxon>
        <taxon>rosids</taxon>
        <taxon>malvids</taxon>
        <taxon>Brassicales</taxon>
        <taxon>Brassicaceae</taxon>
        <taxon>Camelineae</taxon>
        <taxon>Arabidopsis</taxon>
    </lineage>
</organism>
<feature type="chain" id="PRO_0000448527" description="Conserved oligomeric Golgi complex subunit 5">
    <location>
        <begin position="1"/>
        <end position="832"/>
    </location>
</feature>
<feature type="region of interest" description="Disordered" evidence="2">
    <location>
        <begin position="1"/>
        <end position="49"/>
    </location>
</feature>
<feature type="compositionally biased region" description="Pro residues" evidence="2">
    <location>
        <begin position="1"/>
        <end position="11"/>
    </location>
</feature>
<feature type="compositionally biased region" description="Pro residues" evidence="2">
    <location>
        <begin position="23"/>
        <end position="38"/>
    </location>
</feature>
<feature type="compositionally biased region" description="Low complexity" evidence="2">
    <location>
        <begin position="39"/>
        <end position="49"/>
    </location>
</feature>